<evidence type="ECO:0000250" key="1">
    <source>
        <dbReference type="UniProtKB" id="O14508"/>
    </source>
</evidence>
<evidence type="ECO:0000250" key="2">
    <source>
        <dbReference type="UniProtKB" id="O35717"/>
    </source>
</evidence>
<evidence type="ECO:0000255" key="3">
    <source>
        <dbReference type="PROSITE-ProRule" id="PRU00191"/>
    </source>
</evidence>
<evidence type="ECO:0000255" key="4">
    <source>
        <dbReference type="PROSITE-ProRule" id="PRU00194"/>
    </source>
</evidence>
<evidence type="ECO:0000256" key="5">
    <source>
        <dbReference type="SAM" id="MobiDB-lite"/>
    </source>
</evidence>
<name>SOCS2_RAT</name>
<sequence length="198" mass="22380">MTLRCLEPSGNGADRTRSQWGTAGSPEDQSPEAARLAKALRELSQTGWYWGSMTVNEAKEKLKEAPEGTFLIRDSSHSDYLLTISVKTSAGPTNLRIEYQDGKFRLDSIICVKSKLKQFDSVVHLIDYYVQMCKDKRTGPEAPRNGTVHLYLTKPLYTSAPTLQHFCRLSINKCTGTIRGLPLPTRLKDYLEEYKFQV</sequence>
<feature type="chain" id="PRO_0000181240" description="Suppressor of cytokine signaling 2">
    <location>
        <begin position="1"/>
        <end position="198"/>
    </location>
</feature>
<feature type="domain" description="SH2" evidence="3">
    <location>
        <begin position="48"/>
        <end position="156"/>
    </location>
</feature>
<feature type="domain" description="SOCS box" evidence="4">
    <location>
        <begin position="151"/>
        <end position="197"/>
    </location>
</feature>
<feature type="region of interest" description="Interaction with AREL1" evidence="1">
    <location>
        <begin position="1"/>
        <end position="75"/>
    </location>
</feature>
<feature type="region of interest" description="Disordered" evidence="5">
    <location>
        <begin position="1"/>
        <end position="31"/>
    </location>
</feature>
<feature type="modified residue" description="Phosphoserine" evidence="1">
    <location>
        <position position="30"/>
    </location>
</feature>
<feature type="modified residue" description="Phosphoserine" evidence="1">
    <location>
        <position position="52"/>
    </location>
</feature>
<feature type="cross-link" description="Glycyl lysine isopeptide (Lys-Gly) (interchain with G-Cter in ubiquitin)" evidence="1">
    <location>
        <position position="173"/>
    </location>
</feature>
<organism>
    <name type="scientific">Rattus norvegicus</name>
    <name type="common">Rat</name>
    <dbReference type="NCBI Taxonomy" id="10116"/>
    <lineage>
        <taxon>Eukaryota</taxon>
        <taxon>Metazoa</taxon>
        <taxon>Chordata</taxon>
        <taxon>Craniata</taxon>
        <taxon>Vertebrata</taxon>
        <taxon>Euteleostomi</taxon>
        <taxon>Mammalia</taxon>
        <taxon>Eutheria</taxon>
        <taxon>Euarchontoglires</taxon>
        <taxon>Glires</taxon>
        <taxon>Rodentia</taxon>
        <taxon>Myomorpha</taxon>
        <taxon>Muroidea</taxon>
        <taxon>Muridae</taxon>
        <taxon>Murinae</taxon>
        <taxon>Rattus</taxon>
    </lineage>
</organism>
<proteinExistence type="evidence at transcript level"/>
<dbReference type="EMBL" id="AF075382">
    <property type="protein sequence ID" value="AAC26222.1"/>
    <property type="molecule type" value="mRNA"/>
</dbReference>
<dbReference type="RefSeq" id="NP_478115.1">
    <property type="nucleotide sequence ID" value="NM_058208.2"/>
</dbReference>
<dbReference type="RefSeq" id="XP_017450626.1">
    <property type="nucleotide sequence ID" value="XM_017595137.3"/>
</dbReference>
<dbReference type="RefSeq" id="XP_063120415.1">
    <property type="nucleotide sequence ID" value="XM_063264345.1"/>
</dbReference>
<dbReference type="RefSeq" id="XP_063120416.1">
    <property type="nucleotide sequence ID" value="XM_063264346.1"/>
</dbReference>
<dbReference type="SMR" id="O88582"/>
<dbReference type="BioGRID" id="250034">
    <property type="interactions" value="4"/>
</dbReference>
<dbReference type="FunCoup" id="O88582">
    <property type="interactions" value="114"/>
</dbReference>
<dbReference type="STRING" id="10116.ENSRNOP00000011948"/>
<dbReference type="PhosphoSitePlus" id="O88582"/>
<dbReference type="PaxDb" id="10116-ENSRNOP00000011948"/>
<dbReference type="GeneID" id="84607"/>
<dbReference type="KEGG" id="rno:84607"/>
<dbReference type="UCSC" id="RGD:69273">
    <property type="organism name" value="rat"/>
</dbReference>
<dbReference type="AGR" id="RGD:69273"/>
<dbReference type="CTD" id="8835"/>
<dbReference type="RGD" id="69273">
    <property type="gene designation" value="Socs2"/>
</dbReference>
<dbReference type="eggNOG" id="KOG4566">
    <property type="taxonomic scope" value="Eukaryota"/>
</dbReference>
<dbReference type="HOGENOM" id="CLU_079452_4_0_1"/>
<dbReference type="InParanoid" id="O88582"/>
<dbReference type="PhylomeDB" id="O88582"/>
<dbReference type="TreeFam" id="TF321368"/>
<dbReference type="Reactome" id="R-RNO-8951664">
    <property type="pathway name" value="Neddylation"/>
</dbReference>
<dbReference type="UniPathway" id="UPA00143"/>
<dbReference type="PRO" id="PR:O88582"/>
<dbReference type="Proteomes" id="UP000002494">
    <property type="component" value="Unplaced"/>
</dbReference>
<dbReference type="GO" id="GO:0031466">
    <property type="term" value="C:Cul5-RING ubiquitin ligase complex"/>
    <property type="evidence" value="ECO:0000250"/>
    <property type="project" value="UniProtKB"/>
</dbReference>
<dbReference type="GO" id="GO:0005737">
    <property type="term" value="C:cytoplasm"/>
    <property type="evidence" value="ECO:0000266"/>
    <property type="project" value="RGD"/>
</dbReference>
<dbReference type="GO" id="GO:0005126">
    <property type="term" value="F:cytokine receptor binding"/>
    <property type="evidence" value="ECO:0000318"/>
    <property type="project" value="GO_Central"/>
</dbReference>
<dbReference type="GO" id="GO:0005131">
    <property type="term" value="F:growth hormone receptor binding"/>
    <property type="evidence" value="ECO:0000266"/>
    <property type="project" value="RGD"/>
</dbReference>
<dbReference type="GO" id="GO:0005159">
    <property type="term" value="F:insulin-like growth factor receptor binding"/>
    <property type="evidence" value="ECO:0000250"/>
    <property type="project" value="UniProtKB"/>
</dbReference>
<dbReference type="GO" id="GO:0140031">
    <property type="term" value="F:phosphorylation-dependent protein binding"/>
    <property type="evidence" value="ECO:0000250"/>
    <property type="project" value="UniProtKB"/>
</dbReference>
<dbReference type="GO" id="GO:1990756">
    <property type="term" value="F:ubiquitin-like ligase-substrate adaptor activity"/>
    <property type="evidence" value="ECO:0000250"/>
    <property type="project" value="UniProtKB"/>
</dbReference>
<dbReference type="GO" id="GO:0007259">
    <property type="term" value="P:cell surface receptor signaling pathway via JAK-STAT"/>
    <property type="evidence" value="ECO:0000266"/>
    <property type="project" value="RGD"/>
</dbReference>
<dbReference type="GO" id="GO:0032870">
    <property type="term" value="P:cellular response to hormone stimulus"/>
    <property type="evidence" value="ECO:0000266"/>
    <property type="project" value="RGD"/>
</dbReference>
<dbReference type="GO" id="GO:0019221">
    <property type="term" value="P:cytokine-mediated signaling pathway"/>
    <property type="evidence" value="ECO:0000318"/>
    <property type="project" value="GO_Central"/>
</dbReference>
<dbReference type="GO" id="GO:0060396">
    <property type="term" value="P:growth hormone receptor signaling pathway"/>
    <property type="evidence" value="ECO:0000266"/>
    <property type="project" value="RGD"/>
</dbReference>
<dbReference type="GO" id="GO:0035556">
    <property type="term" value="P:intracellular signal transduction"/>
    <property type="evidence" value="ECO:0000266"/>
    <property type="project" value="RGD"/>
</dbReference>
<dbReference type="GO" id="GO:0007595">
    <property type="term" value="P:lactation"/>
    <property type="evidence" value="ECO:0000266"/>
    <property type="project" value="RGD"/>
</dbReference>
<dbReference type="GO" id="GO:0060749">
    <property type="term" value="P:mammary gland alveolus development"/>
    <property type="evidence" value="ECO:0000266"/>
    <property type="project" value="RGD"/>
</dbReference>
<dbReference type="GO" id="GO:0060400">
    <property type="term" value="P:negative regulation of growth hormone receptor signaling pathway"/>
    <property type="evidence" value="ECO:0000250"/>
    <property type="project" value="UniProtKB"/>
</dbReference>
<dbReference type="GO" id="GO:0040015">
    <property type="term" value="P:negative regulation of multicellular organism growth"/>
    <property type="evidence" value="ECO:0000266"/>
    <property type="project" value="RGD"/>
</dbReference>
<dbReference type="GO" id="GO:0046426">
    <property type="term" value="P:negative regulation of receptor signaling pathway via JAK-STAT"/>
    <property type="evidence" value="ECO:0000266"/>
    <property type="project" value="RGD"/>
</dbReference>
<dbReference type="GO" id="GO:0009968">
    <property type="term" value="P:negative regulation of signal transduction"/>
    <property type="evidence" value="ECO:0000266"/>
    <property type="project" value="RGD"/>
</dbReference>
<dbReference type="GO" id="GO:0045666">
    <property type="term" value="P:positive regulation of neuron differentiation"/>
    <property type="evidence" value="ECO:0000266"/>
    <property type="project" value="RGD"/>
</dbReference>
<dbReference type="GO" id="GO:0043161">
    <property type="term" value="P:proteasome-mediated ubiquitin-dependent protein catabolic process"/>
    <property type="evidence" value="ECO:0000250"/>
    <property type="project" value="UniProtKB"/>
</dbReference>
<dbReference type="GO" id="GO:0016567">
    <property type="term" value="P:protein ubiquitination"/>
    <property type="evidence" value="ECO:0007669"/>
    <property type="project" value="UniProtKB-UniPathway"/>
</dbReference>
<dbReference type="GO" id="GO:0040014">
    <property type="term" value="P:regulation of multicellular organism growth"/>
    <property type="evidence" value="ECO:0000266"/>
    <property type="project" value="RGD"/>
</dbReference>
<dbReference type="GO" id="GO:0032355">
    <property type="term" value="P:response to estradiol"/>
    <property type="evidence" value="ECO:0000266"/>
    <property type="project" value="RGD"/>
</dbReference>
<dbReference type="GO" id="GO:0043434">
    <property type="term" value="P:response to peptide hormone"/>
    <property type="evidence" value="ECO:0000270"/>
    <property type="project" value="RGD"/>
</dbReference>
<dbReference type="CDD" id="cd10383">
    <property type="entry name" value="SH2_SOCS2"/>
    <property type="match status" value="1"/>
</dbReference>
<dbReference type="FunFam" id="1.10.750.20:FF:000002">
    <property type="entry name" value="Suppressor of cytokine signaling 2"/>
    <property type="match status" value="1"/>
</dbReference>
<dbReference type="FunFam" id="3.30.505.10:FF:000049">
    <property type="entry name" value="Suppressor of cytokine signaling 2"/>
    <property type="match status" value="1"/>
</dbReference>
<dbReference type="Gene3D" id="3.30.505.10">
    <property type="entry name" value="SH2 domain"/>
    <property type="match status" value="1"/>
</dbReference>
<dbReference type="Gene3D" id="1.10.750.20">
    <property type="entry name" value="SOCS box"/>
    <property type="match status" value="1"/>
</dbReference>
<dbReference type="InterPro" id="IPR000980">
    <property type="entry name" value="SH2"/>
</dbReference>
<dbReference type="InterPro" id="IPR036860">
    <property type="entry name" value="SH2_dom_sf"/>
</dbReference>
<dbReference type="InterPro" id="IPR035862">
    <property type="entry name" value="SOCS2_SH2"/>
</dbReference>
<dbReference type="InterPro" id="IPR001496">
    <property type="entry name" value="SOCS_box"/>
</dbReference>
<dbReference type="InterPro" id="IPR036036">
    <property type="entry name" value="SOCS_box-like_dom_sf"/>
</dbReference>
<dbReference type="PANTHER" id="PTHR10155">
    <property type="entry name" value="PHOSPHATIDYLINOSITOL 3-KINASE REGULATORY SUBUNIT"/>
    <property type="match status" value="1"/>
</dbReference>
<dbReference type="PANTHER" id="PTHR10155:SF7">
    <property type="entry name" value="SUPPRESSOR OF CYTOKINE SIGNALING 2"/>
    <property type="match status" value="1"/>
</dbReference>
<dbReference type="Pfam" id="PF00017">
    <property type="entry name" value="SH2"/>
    <property type="match status" value="1"/>
</dbReference>
<dbReference type="Pfam" id="PF07525">
    <property type="entry name" value="SOCS_box"/>
    <property type="match status" value="1"/>
</dbReference>
<dbReference type="PRINTS" id="PR00401">
    <property type="entry name" value="SH2DOMAIN"/>
</dbReference>
<dbReference type="SMART" id="SM00252">
    <property type="entry name" value="SH2"/>
    <property type="match status" value="1"/>
</dbReference>
<dbReference type="SMART" id="SM00253">
    <property type="entry name" value="SOCS"/>
    <property type="match status" value="1"/>
</dbReference>
<dbReference type="SMART" id="SM00969">
    <property type="entry name" value="SOCS_box"/>
    <property type="match status" value="1"/>
</dbReference>
<dbReference type="SUPFAM" id="SSF55550">
    <property type="entry name" value="SH2 domain"/>
    <property type="match status" value="1"/>
</dbReference>
<dbReference type="SUPFAM" id="SSF158235">
    <property type="entry name" value="SOCS box-like"/>
    <property type="match status" value="1"/>
</dbReference>
<dbReference type="PROSITE" id="PS50001">
    <property type="entry name" value="SH2"/>
    <property type="match status" value="1"/>
</dbReference>
<dbReference type="PROSITE" id="PS50225">
    <property type="entry name" value="SOCS"/>
    <property type="match status" value="1"/>
</dbReference>
<keyword id="KW-0963">Cytoplasm</keyword>
<keyword id="KW-0341">Growth regulation</keyword>
<keyword id="KW-1017">Isopeptide bond</keyword>
<keyword id="KW-0597">Phosphoprotein</keyword>
<keyword id="KW-1185">Reference proteome</keyword>
<keyword id="KW-0727">SH2 domain</keyword>
<keyword id="KW-0734">Signal transduction inhibitor</keyword>
<keyword id="KW-0832">Ubl conjugation</keyword>
<keyword id="KW-0833">Ubl conjugation pathway</keyword>
<reference key="1">
    <citation type="journal article" date="1999" name="Endocrinology">
        <title>Endotoxin-induced inhibition of growth hormone receptor signaling in rat liver in vivo.</title>
        <authorList>
            <person name="Mao Y."/>
            <person name="Ling P.R."/>
            <person name="Fitzgibbons T.P."/>
            <person name="McCowen K.C."/>
            <person name="Frick G.P."/>
            <person name="Bistrian B.R."/>
            <person name="Smith R.J."/>
        </authorList>
    </citation>
    <scope>NUCLEOTIDE SEQUENCE [MRNA]</scope>
    <source>
        <strain>Sprague-Dawley</strain>
        <tissue>Liver</tissue>
    </source>
</reference>
<protein>
    <recommendedName>
        <fullName>Suppressor of cytokine signaling 2</fullName>
        <shortName>SOCS-2</shortName>
    </recommendedName>
    <alternativeName>
        <fullName>Cytokine-inducible SH2 protein 2</fullName>
    </alternativeName>
</protein>
<gene>
    <name type="primary">Socs2</name>
    <name type="synonym">Cish2</name>
</gene>
<accession>O88582</accession>
<comment type="function">
    <text evidence="1">Substrate-recognition component of a cullin-5-RING E3 ubiquitin-protein ligase complex (ECS complex, also named CRL5 complex), which mediates the ubiquitination and subsequent proteasomal degradation of target proteins, such as EPOR and GHR. Specifically recognizes and binds phosphorylated proteins via its SH2 domain, promoting their ubiquitination. The ECS(SOCS2) complex acts as a key regulator of growth hormone receptor (GHR) levels by mediating ubiquitination and degradation of GHR, following GHR phosphorylation by JAK2. The ECS(SOCS2) also catalyzes ubiquitination and degradation of JAK2-phosphorylated EPOR.</text>
</comment>
<comment type="pathway">
    <text evidence="1">Protein modification; protein ubiquitination.</text>
</comment>
<comment type="subunit">
    <text evidence="1">Substrate-recognition component of the ECS(SOCS2) complex, composed of SOCS2, CUL5, ELOB, ELOC and RNF7/RBX2. Interacts with IGF1R. Interacts with DCUN1D1.</text>
</comment>
<comment type="subcellular location">
    <subcellularLocation>
        <location evidence="1">Cytoplasm</location>
    </subcellularLocation>
</comment>
<comment type="domain">
    <text evidence="1">The SOCS box domain mediates the interaction with the Elongin BC complex, an adapter module in different E3 ubiquitin ligase complexes.</text>
</comment>
<comment type="PTM">
    <text evidence="1 2">Ubiquitinated; mediated by AREL1 and leading to its subsequent proteasomal degradation. Ubiquitination is dependent on its phosphorylation at Ser-52, by PKC (By similarity). Ubiquitination is stimulated by LPS (By similarity).</text>
</comment>
<comment type="PTM">
    <text evidence="1">Phosphorylation at Ser-52 by PKC facilitates its ubiquitination and proteasomal degradation.</text>
</comment>